<dbReference type="EMBL" id="U56416">
    <property type="protein sequence ID" value="AAB01212.1"/>
    <property type="molecule type" value="Genomic_DNA"/>
</dbReference>
<dbReference type="EMBL" id="Z71664">
    <property type="protein sequence ID" value="CAA96330.1"/>
    <property type="molecule type" value="Genomic_DNA"/>
</dbReference>
<dbReference type="EMBL" id="AY558423">
    <property type="protein sequence ID" value="AAS56749.1"/>
    <property type="molecule type" value="Genomic_DNA"/>
</dbReference>
<dbReference type="EMBL" id="BK006947">
    <property type="protein sequence ID" value="DAA10590.1"/>
    <property type="molecule type" value="Genomic_DNA"/>
</dbReference>
<dbReference type="PIR" id="S63380">
    <property type="entry name" value="S63380"/>
</dbReference>
<dbReference type="RefSeq" id="NP_014447.3">
    <molecule id="P53604-1"/>
    <property type="nucleotide sequence ID" value="NM_001183226.3"/>
</dbReference>
<dbReference type="BioGRID" id="35874">
    <property type="interactions" value="145"/>
</dbReference>
<dbReference type="DIP" id="DIP-2499N"/>
<dbReference type="FunCoup" id="P53604">
    <property type="interactions" value="38"/>
</dbReference>
<dbReference type="IntAct" id="P53604">
    <property type="interactions" value="6"/>
</dbReference>
<dbReference type="MINT" id="P53604"/>
<dbReference type="STRING" id="4932.YNR049C"/>
<dbReference type="GlyGen" id="P53604">
    <property type="glycosylation" value="3 sites, 1 O-linked glycan (2 sites)"/>
</dbReference>
<dbReference type="iPTMnet" id="P53604"/>
<dbReference type="PaxDb" id="4932-YNR049C"/>
<dbReference type="PeptideAtlas" id="P53604"/>
<dbReference type="EnsemblFungi" id="YNR049C_mRNA">
    <molecule id="P53604-1"/>
    <property type="protein sequence ID" value="YNR049C"/>
    <property type="gene ID" value="YNR049C"/>
</dbReference>
<dbReference type="GeneID" id="855785"/>
<dbReference type="KEGG" id="sce:YNR049C"/>
<dbReference type="AGR" id="SGD:S000005332"/>
<dbReference type="SGD" id="S000005332">
    <property type="gene designation" value="MSO1"/>
</dbReference>
<dbReference type="VEuPathDB" id="FungiDB:YNR049C"/>
<dbReference type="eggNOG" id="ENOG502S4R3">
    <property type="taxonomic scope" value="Eukaryota"/>
</dbReference>
<dbReference type="HOGENOM" id="CLU_082503_0_0_1"/>
<dbReference type="InParanoid" id="P53604"/>
<dbReference type="OMA" id="SHRDPTH"/>
<dbReference type="OrthoDB" id="4094515at2759"/>
<dbReference type="BioCyc" id="YEAST:G3O-33356-MONOMER"/>
<dbReference type="BioGRID-ORCS" id="855785">
    <property type="hits" value="0 hits in 10 CRISPR screens"/>
</dbReference>
<dbReference type="PRO" id="PR:P53604"/>
<dbReference type="Proteomes" id="UP000002311">
    <property type="component" value="Chromosome XIV"/>
</dbReference>
<dbReference type="RNAct" id="P53604">
    <property type="molecule type" value="protein"/>
</dbReference>
<dbReference type="GO" id="GO:0033101">
    <property type="term" value="C:cellular bud membrane"/>
    <property type="evidence" value="ECO:0000314"/>
    <property type="project" value="SGD"/>
</dbReference>
<dbReference type="GO" id="GO:0005935">
    <property type="term" value="C:cellular bud neck"/>
    <property type="evidence" value="ECO:0000314"/>
    <property type="project" value="SGD"/>
</dbReference>
<dbReference type="GO" id="GO:0005934">
    <property type="term" value="C:cellular bud tip"/>
    <property type="evidence" value="ECO:0000314"/>
    <property type="project" value="SGD"/>
</dbReference>
<dbReference type="GO" id="GO:0005737">
    <property type="term" value="C:cytoplasm"/>
    <property type="evidence" value="ECO:0007005"/>
    <property type="project" value="SGD"/>
</dbReference>
<dbReference type="GO" id="GO:0005829">
    <property type="term" value="C:cytosol"/>
    <property type="evidence" value="ECO:0007005"/>
    <property type="project" value="SGD"/>
</dbReference>
<dbReference type="GO" id="GO:0005634">
    <property type="term" value="C:nucleus"/>
    <property type="evidence" value="ECO:0007005"/>
    <property type="project" value="SGD"/>
</dbReference>
<dbReference type="GO" id="GO:0005886">
    <property type="term" value="C:plasma membrane"/>
    <property type="evidence" value="ECO:0000314"/>
    <property type="project" value="SGD"/>
</dbReference>
<dbReference type="GO" id="GO:0005628">
    <property type="term" value="C:prospore membrane"/>
    <property type="evidence" value="ECO:0000314"/>
    <property type="project" value="SGD"/>
</dbReference>
<dbReference type="GO" id="GO:0031201">
    <property type="term" value="C:SNARE complex"/>
    <property type="evidence" value="ECO:0000314"/>
    <property type="project" value="SGD"/>
</dbReference>
<dbReference type="GO" id="GO:0032120">
    <property type="term" value="P:ascospore-type prospore membrane formation"/>
    <property type="evidence" value="ECO:0000315"/>
    <property type="project" value="SGD"/>
</dbReference>
<dbReference type="GO" id="GO:0061025">
    <property type="term" value="P:membrane fusion"/>
    <property type="evidence" value="ECO:0000315"/>
    <property type="project" value="SGD"/>
</dbReference>
<dbReference type="GO" id="GO:0015031">
    <property type="term" value="P:protein transport"/>
    <property type="evidence" value="ECO:0007669"/>
    <property type="project" value="UniProtKB-KW"/>
</dbReference>
<dbReference type="GO" id="GO:0006904">
    <property type="term" value="P:vesicle docking involved in exocytosis"/>
    <property type="evidence" value="ECO:0000314"/>
    <property type="project" value="SGD"/>
</dbReference>
<dbReference type="InterPro" id="IPR028095">
    <property type="entry name" value="Mso1_N_dom"/>
</dbReference>
<dbReference type="Pfam" id="PF14477">
    <property type="entry name" value="Mso1_C"/>
    <property type="match status" value="1"/>
</dbReference>
<dbReference type="Pfam" id="PF14475">
    <property type="entry name" value="Mso1_Sec1_bdg"/>
    <property type="match status" value="1"/>
</dbReference>
<protein>
    <recommendedName>
        <fullName>Protein MSO1</fullName>
    </recommendedName>
</protein>
<organism>
    <name type="scientific">Saccharomyces cerevisiae (strain ATCC 204508 / S288c)</name>
    <name type="common">Baker's yeast</name>
    <dbReference type="NCBI Taxonomy" id="559292"/>
    <lineage>
        <taxon>Eukaryota</taxon>
        <taxon>Fungi</taxon>
        <taxon>Dikarya</taxon>
        <taxon>Ascomycota</taxon>
        <taxon>Saccharomycotina</taxon>
        <taxon>Saccharomycetes</taxon>
        <taxon>Saccharomycetales</taxon>
        <taxon>Saccharomycetaceae</taxon>
        <taxon>Saccharomyces</taxon>
    </lineage>
</organism>
<evidence type="ECO:0000256" key="1">
    <source>
        <dbReference type="SAM" id="MobiDB-lite"/>
    </source>
</evidence>
<evidence type="ECO:0000269" key="2">
    <source>
    </source>
</evidence>
<evidence type="ECO:0000305" key="3"/>
<evidence type="ECO:0007744" key="4">
    <source>
    </source>
</evidence>
<evidence type="ECO:0007744" key="5">
    <source>
    </source>
</evidence>
<keyword id="KW-0007">Acetylation</keyword>
<keyword id="KW-0024">Alternative initiation</keyword>
<keyword id="KW-0597">Phosphoprotein</keyword>
<keyword id="KW-0653">Protein transport</keyword>
<keyword id="KW-1185">Reference proteome</keyword>
<keyword id="KW-0813">Transport</keyword>
<gene>
    <name type="primary">MSO1</name>
    <name type="ordered locus">YNR049C</name>
    <name type="ORF">N3457</name>
</gene>
<comment type="function">
    <text>Involved in secretion. Component of the secretory vesicle docking complex.</text>
</comment>
<comment type="subunit">
    <text>Interacts physically with SEC1.</text>
</comment>
<comment type="interaction">
    <interactant intactId="EBI-2086543">
        <id>P53604</id>
    </interactant>
    <interactant intactId="EBI-16833">
        <id>P30619</id>
        <label>SEC1</label>
    </interactant>
    <organismsDiffer>false</organismsDiffer>
    <experiments>4</experiments>
</comment>
<comment type="alternative products">
    <event type="alternative initiation"/>
    <isoform>
        <id>P53604-1</id>
        <name>1</name>
        <sequence type="displayed"/>
    </isoform>
    <isoform>
        <id>P53604-2</id>
        <name>2</name>
        <sequence type="described" ref="VSP_058125"/>
    </isoform>
</comment>
<comment type="miscellaneous">
    <text evidence="2">Present with 1380 molecules/cell in log phase SD medium.</text>
</comment>
<name>MSO1_YEAST</name>
<proteinExistence type="evidence at protein level"/>
<feature type="chain" id="PRO_0000096600" description="Protein MSO1">
    <location>
        <begin position="1"/>
        <end position="210"/>
    </location>
</feature>
<feature type="region of interest" description="Disordered" evidence="1">
    <location>
        <begin position="88"/>
        <end position="210"/>
    </location>
</feature>
<feature type="compositionally biased region" description="Polar residues" evidence="1">
    <location>
        <begin position="117"/>
        <end position="141"/>
    </location>
</feature>
<feature type="compositionally biased region" description="Low complexity" evidence="1">
    <location>
        <begin position="142"/>
        <end position="161"/>
    </location>
</feature>
<feature type="compositionally biased region" description="Low complexity" evidence="1">
    <location>
        <begin position="172"/>
        <end position="183"/>
    </location>
</feature>
<feature type="modified residue" description="N-acetylmethionine" evidence="5">
    <location>
        <position position="1"/>
    </location>
</feature>
<feature type="modified residue" description="Phosphoserine" evidence="4">
    <location>
        <position position="102"/>
    </location>
</feature>
<feature type="splice variant" id="VSP_058125" description="In isoform 2." evidence="3">
    <location>
        <position position="1"/>
    </location>
</feature>
<feature type="initiator methionine" description="Removed" evidence="5">
    <location sequence="P53604-2">
        <position position="1"/>
    </location>
</feature>
<feature type="modified residue" description="N-acetylserine" evidence="5">
    <location sequence="P53604-2">
        <position position="2"/>
    </location>
</feature>
<sequence>MMSQVSHSQEGSGRFWNKFKSSTKSLSTSLAHLSIKAEKDGDTVNTTLVHKGLVKFYENQHPFQGFPGWLGEKEDLPNERKILDTQVKHDMKKQNSRHFSPSFSNRRKASSEDPMGTPSSNGNTPEYTPASKSFQDIYNNHTSSSSATPRRASSRPTRPSAGQEFRASLGRSKTSNSFNTSSTPTPPPDASSGVMAMKDRLKRRNNDYGF</sequence>
<reference key="1">
    <citation type="journal article" date="1997" name="Proc. Natl. Acad. Sci. U.S.A.">
        <title>Mso1p: a yeast protein that functions in secretion and interacts physically and genetically with Sec1p.</title>
        <authorList>
            <person name="Aalto M.K."/>
            <person name="Jantti J."/>
            <person name="Ostling J."/>
            <person name="Keranen S."/>
            <person name="Ronne H."/>
        </authorList>
    </citation>
    <scope>NUCLEOTIDE SEQUENCE [GENOMIC DNA]</scope>
    <source>
        <strain>ATCC 208353 / W303-1A</strain>
    </source>
</reference>
<reference key="2">
    <citation type="journal article" date="1997" name="Nature">
        <title>The nucleotide sequence of Saccharomyces cerevisiae chromosome XIV and its evolutionary implications.</title>
        <authorList>
            <person name="Philippsen P."/>
            <person name="Kleine K."/>
            <person name="Poehlmann R."/>
            <person name="Duesterhoeft A."/>
            <person name="Hamberg K."/>
            <person name="Hegemann J.H."/>
            <person name="Obermaier B."/>
            <person name="Urrestarazu L.A."/>
            <person name="Aert R."/>
            <person name="Albermann K."/>
            <person name="Altmann R."/>
            <person name="Andre B."/>
            <person name="Baladron V."/>
            <person name="Ballesta J.P.G."/>
            <person name="Becam A.-M."/>
            <person name="Beinhauer J.D."/>
            <person name="Boskovic J."/>
            <person name="Buitrago M.J."/>
            <person name="Bussereau F."/>
            <person name="Coster F."/>
            <person name="Crouzet M."/>
            <person name="D'Angelo M."/>
            <person name="Dal Pero F."/>
            <person name="De Antoni A."/>
            <person name="del Rey F."/>
            <person name="Doignon F."/>
            <person name="Domdey H."/>
            <person name="Dubois E."/>
            <person name="Fiedler T.A."/>
            <person name="Fleig U."/>
            <person name="Floeth M."/>
            <person name="Fritz C."/>
            <person name="Gaillardin C."/>
            <person name="Garcia-Cantalejo J.M."/>
            <person name="Glansdorff N."/>
            <person name="Goffeau A."/>
            <person name="Gueldener U."/>
            <person name="Herbert C.J."/>
            <person name="Heumann K."/>
            <person name="Heuss-Neitzel D."/>
            <person name="Hilbert H."/>
            <person name="Hinni K."/>
            <person name="Iraqui Houssaini I."/>
            <person name="Jacquet M."/>
            <person name="Jimenez A."/>
            <person name="Jonniaux J.-L."/>
            <person name="Karpfinger-Hartl L."/>
            <person name="Lanfranchi G."/>
            <person name="Lepingle A."/>
            <person name="Levesque H."/>
            <person name="Lyck R."/>
            <person name="Maftahi M."/>
            <person name="Mallet L."/>
            <person name="Maurer C.T.C."/>
            <person name="Messenguy F."/>
            <person name="Mewes H.-W."/>
            <person name="Moestl D."/>
            <person name="Nasr F."/>
            <person name="Nicaud J.-M."/>
            <person name="Niedenthal R.K."/>
            <person name="Pandolfo D."/>
            <person name="Pierard A."/>
            <person name="Piravandi E."/>
            <person name="Planta R.J."/>
            <person name="Pohl T.M."/>
            <person name="Purnelle B."/>
            <person name="Rebischung C."/>
            <person name="Remacha M.A."/>
            <person name="Revuelta J.L."/>
            <person name="Rinke M."/>
            <person name="Saiz J.E."/>
            <person name="Sartorello F."/>
            <person name="Scherens B."/>
            <person name="Sen-Gupta M."/>
            <person name="Soler-Mira A."/>
            <person name="Urbanus J.H.M."/>
            <person name="Valle G."/>
            <person name="Van Dyck L."/>
            <person name="Verhasselt P."/>
            <person name="Vierendeels F."/>
            <person name="Vissers S."/>
            <person name="Voet M."/>
            <person name="Volckaert G."/>
            <person name="Wach A."/>
            <person name="Wambutt R."/>
            <person name="Wedler H."/>
            <person name="Zollner A."/>
            <person name="Hani J."/>
        </authorList>
    </citation>
    <scope>NUCLEOTIDE SEQUENCE [LARGE SCALE GENOMIC DNA]</scope>
    <source>
        <strain>ATCC 204508 / S288c</strain>
    </source>
</reference>
<reference key="3">
    <citation type="journal article" date="2014" name="G3 (Bethesda)">
        <title>The reference genome sequence of Saccharomyces cerevisiae: Then and now.</title>
        <authorList>
            <person name="Engel S.R."/>
            <person name="Dietrich F.S."/>
            <person name="Fisk D.G."/>
            <person name="Binkley G."/>
            <person name="Balakrishnan R."/>
            <person name="Costanzo M.C."/>
            <person name="Dwight S.S."/>
            <person name="Hitz B.C."/>
            <person name="Karra K."/>
            <person name="Nash R.S."/>
            <person name="Weng S."/>
            <person name="Wong E.D."/>
            <person name="Lloyd P."/>
            <person name="Skrzypek M.S."/>
            <person name="Miyasato S.R."/>
            <person name="Simison M."/>
            <person name="Cherry J.M."/>
        </authorList>
    </citation>
    <scope>GENOME REANNOTATION</scope>
    <source>
        <strain>ATCC 204508 / S288c</strain>
    </source>
</reference>
<reference key="4">
    <citation type="journal article" date="2007" name="Genome Res.">
        <title>Approaching a complete repository of sequence-verified protein-encoding clones for Saccharomyces cerevisiae.</title>
        <authorList>
            <person name="Hu Y."/>
            <person name="Rolfs A."/>
            <person name="Bhullar B."/>
            <person name="Murthy T.V.S."/>
            <person name="Zhu C."/>
            <person name="Berger M.F."/>
            <person name="Camargo A.A."/>
            <person name="Kelley F."/>
            <person name="McCarron S."/>
            <person name="Jepson D."/>
            <person name="Richardson A."/>
            <person name="Raphael J."/>
            <person name="Moreira D."/>
            <person name="Taycher E."/>
            <person name="Zuo D."/>
            <person name="Mohr S."/>
            <person name="Kane M.F."/>
            <person name="Williamson J."/>
            <person name="Simpson A.J.G."/>
            <person name="Bulyk M.L."/>
            <person name="Harlow E."/>
            <person name="Marsischky G."/>
            <person name="Kolodner R.D."/>
            <person name="LaBaer J."/>
        </authorList>
    </citation>
    <scope>NUCLEOTIDE SEQUENCE [GENOMIC DNA]</scope>
    <source>
        <strain>ATCC 204508 / S288c</strain>
    </source>
</reference>
<reference key="5">
    <citation type="journal article" date="2003" name="Nature">
        <title>Global analysis of protein expression in yeast.</title>
        <authorList>
            <person name="Ghaemmaghami S."/>
            <person name="Huh W.-K."/>
            <person name="Bower K."/>
            <person name="Howson R.W."/>
            <person name="Belle A."/>
            <person name="Dephoure N."/>
            <person name="O'Shea E.K."/>
            <person name="Weissman J.S."/>
        </authorList>
    </citation>
    <scope>LEVEL OF PROTEIN EXPRESSION [LARGE SCALE ANALYSIS]</scope>
</reference>
<reference key="6">
    <citation type="journal article" date="2007" name="J. Proteome Res.">
        <title>Large-scale phosphorylation analysis of alpha-factor-arrested Saccharomyces cerevisiae.</title>
        <authorList>
            <person name="Li X."/>
            <person name="Gerber S.A."/>
            <person name="Rudner A.D."/>
            <person name="Beausoleil S.A."/>
            <person name="Haas W."/>
            <person name="Villen J."/>
            <person name="Elias J.E."/>
            <person name="Gygi S.P."/>
        </authorList>
    </citation>
    <scope>PHOSPHORYLATION [LARGE SCALE ANALYSIS] AT SER-102</scope>
    <scope>IDENTIFICATION BY MASS SPECTROMETRY [LARGE SCALE ANALYSIS]</scope>
    <source>
        <strain>ADR376</strain>
    </source>
</reference>
<reference key="7">
    <citation type="journal article" date="2009" name="Science">
        <title>Global analysis of Cdk1 substrate phosphorylation sites provides insights into evolution.</title>
        <authorList>
            <person name="Holt L.J."/>
            <person name="Tuch B.B."/>
            <person name="Villen J."/>
            <person name="Johnson A.D."/>
            <person name="Gygi S.P."/>
            <person name="Morgan D.O."/>
        </authorList>
    </citation>
    <scope>IDENTIFICATION BY MASS SPECTROMETRY [LARGE SCALE ANALYSIS]</scope>
</reference>
<reference key="8">
    <citation type="journal article" date="2012" name="Proc. Natl. Acad. Sci. U.S.A.">
        <title>N-terminal acetylome analyses and functional insights of the N-terminal acetyltransferase NatB.</title>
        <authorList>
            <person name="Van Damme P."/>
            <person name="Lasa M."/>
            <person name="Polevoda B."/>
            <person name="Gazquez C."/>
            <person name="Elosegui-Artola A."/>
            <person name="Kim D.S."/>
            <person name="De Juan-Pardo E."/>
            <person name="Demeyer K."/>
            <person name="Hole K."/>
            <person name="Larrea E."/>
            <person name="Timmerman E."/>
            <person name="Prieto J."/>
            <person name="Arnesen T."/>
            <person name="Sherman F."/>
            <person name="Gevaert K."/>
            <person name="Aldabe R."/>
        </authorList>
    </citation>
    <scope>ACETYLATION [LARGE SCALE ANALYSIS] AT MET-1</scope>
    <scope>ACETYLATION [LARGE SCALE ANALYSIS] AT SER-2 (ISOFORM 2)</scope>
    <scope>CLEAVAGE OF INITIATOR METHIONINE [LARGE SCALE ANALYSIS] (ISOFORM 2)</scope>
    <scope>IDENTIFICATION BY MASS SPECTROMETRY [LARGE SCALE ANALYSIS]</scope>
</reference>
<accession>P53604</accession>
<accession>D6W1M4</accession>